<evidence type="ECO:0000269" key="1">
    <source ref="1"/>
</evidence>
<evidence type="ECO:0000305" key="2"/>
<feature type="chain" id="PRO_0000257980" description="Antiviral protein CAP">
    <location>
        <begin position="1" status="less than"/>
        <end position="101"/>
    </location>
</feature>
<feature type="non-terminal residue">
    <location>
        <position position="1"/>
    </location>
</feature>
<comment type="function">
    <text evidence="1">Has antiviral activity against tobacco mosaic virus and antitumor activity.</text>
</comment>
<organism>
    <name type="scientific">Coprinus comatus</name>
    <name type="common">Shaggy mane</name>
    <dbReference type="NCBI Taxonomy" id="56187"/>
    <lineage>
        <taxon>Eukaryota</taxon>
        <taxon>Fungi</taxon>
        <taxon>Dikarya</taxon>
        <taxon>Basidiomycota</taxon>
        <taxon>Agaricomycotina</taxon>
        <taxon>Agaricomycetes</taxon>
        <taxon>Agaricomycetidae</taxon>
        <taxon>Agaricales</taxon>
        <taxon>Agaricineae</taxon>
        <taxon>Agaricaceae</taxon>
        <taxon>Coprinus</taxon>
    </lineage>
</organism>
<keyword id="KW-0930">Antiviral protein</keyword>
<keyword id="KW-0903">Direct protein sequencing</keyword>
<dbReference type="SMR" id="P83811"/>
<dbReference type="GO" id="GO:0050688">
    <property type="term" value="P:regulation of defense response to virus"/>
    <property type="evidence" value="ECO:0007669"/>
    <property type="project" value="UniProtKB-KW"/>
</dbReference>
<dbReference type="InterPro" id="IPR054443">
    <property type="entry name" value="Y3-like_dom"/>
</dbReference>
<dbReference type="Pfam" id="PF22803">
    <property type="entry name" value="GBD_Y3"/>
    <property type="match status" value="1"/>
</dbReference>
<reference evidence="2" key="1">
    <citation type="submission" date="2004-02" db="UniProtKB">
        <authorList>
            <person name="Wu L.-P."/>
            <person name="Wu Z.-J."/>
            <person name="Lin Q.-Y."/>
            <person name="Xie L.-H."/>
        </authorList>
    </citation>
    <scope>PROTEIN SEQUENCE</scope>
    <scope>FUNCTION</scope>
    <source>
        <tissue>Fruiting body</tissue>
    </source>
</reference>
<accession>P83811</accession>
<proteinExistence type="evidence at protein level"/>
<name>CAP_COPCM</name>
<sequence>NRDVAACARFIDDFCDTLTPNIYRPRDNGQRCYAVNGHRCDFTVFNTNNGGNPIRASTPNCKTVLRTAANRCPTGGRGKINPNAPFLFAIDPNDGDCSTNF</sequence>
<protein>
    <recommendedName>
        <fullName>Antiviral protein CAP</fullName>
    </recommendedName>
</protein>